<comment type="function">
    <text evidence="1">Catalyzes the transfer of a N-acetyl-glucosamine moiety to 1D-myo-inositol 3-phosphate to produce 1D-myo-inositol 2-acetamido-2-deoxy-glucopyranoside 3-phosphate in the mycothiol biosynthesis pathway.</text>
</comment>
<comment type="catalytic activity">
    <reaction evidence="1">
        <text>1D-myo-inositol 3-phosphate + UDP-N-acetyl-alpha-D-glucosamine = 1D-myo-inositol 2-acetamido-2-deoxy-alpha-D-glucopyranoside 3-phosphate + UDP + H(+)</text>
        <dbReference type="Rhea" id="RHEA:26188"/>
        <dbReference type="ChEBI" id="CHEBI:15378"/>
        <dbReference type="ChEBI" id="CHEBI:57705"/>
        <dbReference type="ChEBI" id="CHEBI:58223"/>
        <dbReference type="ChEBI" id="CHEBI:58401"/>
        <dbReference type="ChEBI" id="CHEBI:58892"/>
        <dbReference type="EC" id="2.4.1.250"/>
    </reaction>
</comment>
<comment type="subunit">
    <text evidence="1">Homodimer.</text>
</comment>
<comment type="similarity">
    <text evidence="1">Belongs to the glycosyltransferase group 1 family. MshA subfamily.</text>
</comment>
<proteinExistence type="inferred from homology"/>
<name>MSHA_ARTS2</name>
<gene>
    <name evidence="1" type="primary">mshA</name>
    <name type="ordered locus">Arth_2900</name>
</gene>
<dbReference type="EC" id="2.4.1.250" evidence="1"/>
<dbReference type="EMBL" id="CP000454">
    <property type="protein sequence ID" value="ABK04279.1"/>
    <property type="molecule type" value="Genomic_DNA"/>
</dbReference>
<dbReference type="RefSeq" id="WP_011692738.1">
    <property type="nucleotide sequence ID" value="NC_008541.1"/>
</dbReference>
<dbReference type="SMR" id="A0JZ09"/>
<dbReference type="STRING" id="290399.Arth_2900"/>
<dbReference type="CAZy" id="GT4">
    <property type="family name" value="Glycosyltransferase Family 4"/>
</dbReference>
<dbReference type="KEGG" id="art:Arth_2900"/>
<dbReference type="eggNOG" id="COG0438">
    <property type="taxonomic scope" value="Bacteria"/>
</dbReference>
<dbReference type="HOGENOM" id="CLU_009583_2_3_11"/>
<dbReference type="OrthoDB" id="9810929at2"/>
<dbReference type="Proteomes" id="UP000000754">
    <property type="component" value="Chromosome"/>
</dbReference>
<dbReference type="GO" id="GO:0008375">
    <property type="term" value="F:acetylglucosaminyltransferase activity"/>
    <property type="evidence" value="ECO:0007669"/>
    <property type="project" value="UniProtKB-UniRule"/>
</dbReference>
<dbReference type="GO" id="GO:0102710">
    <property type="term" value="F:D-inositol-3-phosphate glycosyltransferase activity"/>
    <property type="evidence" value="ECO:0007669"/>
    <property type="project" value="UniProtKB-EC"/>
</dbReference>
<dbReference type="GO" id="GO:0000287">
    <property type="term" value="F:magnesium ion binding"/>
    <property type="evidence" value="ECO:0007669"/>
    <property type="project" value="UniProtKB-UniRule"/>
</dbReference>
<dbReference type="GO" id="GO:0010125">
    <property type="term" value="P:mycothiol biosynthetic process"/>
    <property type="evidence" value="ECO:0007669"/>
    <property type="project" value="UniProtKB-UniRule"/>
</dbReference>
<dbReference type="Gene3D" id="3.40.50.2000">
    <property type="entry name" value="Glycogen Phosphorylase B"/>
    <property type="match status" value="2"/>
</dbReference>
<dbReference type="HAMAP" id="MF_01695">
    <property type="entry name" value="MshA"/>
    <property type="match status" value="1"/>
</dbReference>
<dbReference type="InterPro" id="IPR001296">
    <property type="entry name" value="Glyco_trans_1"/>
</dbReference>
<dbReference type="InterPro" id="IPR028098">
    <property type="entry name" value="Glyco_trans_4-like_N"/>
</dbReference>
<dbReference type="InterPro" id="IPR050194">
    <property type="entry name" value="Glycosyltransferase_grp1"/>
</dbReference>
<dbReference type="InterPro" id="IPR017814">
    <property type="entry name" value="Mycothiol_biosynthesis_MshA"/>
</dbReference>
<dbReference type="NCBIfam" id="TIGR03449">
    <property type="entry name" value="mycothiol_MshA"/>
    <property type="match status" value="1"/>
</dbReference>
<dbReference type="PANTHER" id="PTHR45947">
    <property type="entry name" value="SULFOQUINOVOSYL TRANSFERASE SQD2"/>
    <property type="match status" value="1"/>
</dbReference>
<dbReference type="PANTHER" id="PTHR45947:SF3">
    <property type="entry name" value="SULFOQUINOVOSYL TRANSFERASE SQD2"/>
    <property type="match status" value="1"/>
</dbReference>
<dbReference type="Pfam" id="PF13439">
    <property type="entry name" value="Glyco_transf_4"/>
    <property type="match status" value="1"/>
</dbReference>
<dbReference type="Pfam" id="PF00534">
    <property type="entry name" value="Glycos_transf_1"/>
    <property type="match status" value="1"/>
</dbReference>
<dbReference type="SUPFAM" id="SSF53756">
    <property type="entry name" value="UDP-Glycosyltransferase/glycogen phosphorylase"/>
    <property type="match status" value="1"/>
</dbReference>
<evidence type="ECO:0000255" key="1">
    <source>
        <dbReference type="HAMAP-Rule" id="MF_01695"/>
    </source>
</evidence>
<keyword id="KW-0328">Glycosyltransferase</keyword>
<keyword id="KW-0460">Magnesium</keyword>
<keyword id="KW-0479">Metal-binding</keyword>
<keyword id="KW-1185">Reference proteome</keyword>
<keyword id="KW-0808">Transferase</keyword>
<reference key="1">
    <citation type="journal article" date="2013" name="Stand. Genomic Sci.">
        <title>Complete genome sequence of Arthrobacter sp. strain FB24.</title>
        <authorList>
            <person name="Nakatsu C.H."/>
            <person name="Barabote R."/>
            <person name="Thompson S."/>
            <person name="Bruce D."/>
            <person name="Detter C."/>
            <person name="Brettin T."/>
            <person name="Han C."/>
            <person name="Beasley F."/>
            <person name="Chen W."/>
            <person name="Konopka A."/>
            <person name="Xie G."/>
        </authorList>
    </citation>
    <scope>NUCLEOTIDE SEQUENCE [LARGE SCALE GENOMIC DNA]</scope>
    <source>
        <strain>FB24</strain>
    </source>
</reference>
<accession>A0JZ09</accession>
<feature type="chain" id="PRO_0000400111" description="D-inositol 3-phosphate glycosyltransferase">
    <location>
        <begin position="1"/>
        <end position="421"/>
    </location>
</feature>
<feature type="binding site" evidence="1">
    <location>
        <position position="13"/>
    </location>
    <ligand>
        <name>1D-myo-inositol 3-phosphate</name>
        <dbReference type="ChEBI" id="CHEBI:58401"/>
    </ligand>
</feature>
<feature type="binding site" evidence="1">
    <location>
        <begin position="19"/>
        <end position="20"/>
    </location>
    <ligand>
        <name>UDP-N-acetyl-alpha-D-glucosamine</name>
        <dbReference type="ChEBI" id="CHEBI:57705"/>
    </ligand>
</feature>
<feature type="binding site" evidence="1">
    <location>
        <begin position="24"/>
        <end position="29"/>
    </location>
    <ligand>
        <name>1D-myo-inositol 3-phosphate</name>
        <dbReference type="ChEBI" id="CHEBI:58401"/>
    </ligand>
</feature>
<feature type="binding site" evidence="1">
    <location>
        <position position="27"/>
    </location>
    <ligand>
        <name>UDP-N-acetyl-alpha-D-glucosamine</name>
        <dbReference type="ChEBI" id="CHEBI:57705"/>
    </ligand>
</feature>
<feature type="binding site" evidence="1">
    <location>
        <position position="82"/>
    </location>
    <ligand>
        <name>1D-myo-inositol 3-phosphate</name>
        <dbReference type="ChEBI" id="CHEBI:58401"/>
    </ligand>
</feature>
<feature type="binding site" evidence="1">
    <location>
        <position position="115"/>
    </location>
    <ligand>
        <name>1D-myo-inositol 3-phosphate</name>
        <dbReference type="ChEBI" id="CHEBI:58401"/>
    </ligand>
</feature>
<feature type="binding site" evidence="1">
    <location>
        <position position="139"/>
    </location>
    <ligand>
        <name>1D-myo-inositol 3-phosphate</name>
        <dbReference type="ChEBI" id="CHEBI:58401"/>
    </ligand>
</feature>
<feature type="binding site" evidence="1">
    <location>
        <position position="159"/>
    </location>
    <ligand>
        <name>1D-myo-inositol 3-phosphate</name>
        <dbReference type="ChEBI" id="CHEBI:58401"/>
    </ligand>
</feature>
<feature type="binding site" evidence="1">
    <location>
        <position position="233"/>
    </location>
    <ligand>
        <name>UDP-N-acetyl-alpha-D-glucosamine</name>
        <dbReference type="ChEBI" id="CHEBI:57705"/>
    </ligand>
</feature>
<feature type="binding site" evidence="1">
    <location>
        <position position="238"/>
    </location>
    <ligand>
        <name>UDP-N-acetyl-alpha-D-glucosamine</name>
        <dbReference type="ChEBI" id="CHEBI:57705"/>
    </ligand>
</feature>
<feature type="binding site" evidence="1">
    <location>
        <position position="294"/>
    </location>
    <ligand>
        <name>UDP-N-acetyl-alpha-D-glucosamine</name>
        <dbReference type="ChEBI" id="CHEBI:57705"/>
    </ligand>
</feature>
<feature type="binding site" evidence="1">
    <location>
        <position position="303"/>
    </location>
    <ligand>
        <name>Mg(2+)</name>
        <dbReference type="ChEBI" id="CHEBI:18420"/>
    </ligand>
</feature>
<feature type="binding site" evidence="1">
    <location>
        <position position="304"/>
    </location>
    <ligand>
        <name>Mg(2+)</name>
        <dbReference type="ChEBI" id="CHEBI:18420"/>
    </ligand>
</feature>
<feature type="binding site" evidence="1">
    <location>
        <position position="306"/>
    </location>
    <ligand>
        <name>Mg(2+)</name>
        <dbReference type="ChEBI" id="CHEBI:18420"/>
    </ligand>
</feature>
<feature type="binding site" evidence="1">
    <location>
        <position position="316"/>
    </location>
    <ligand>
        <name>UDP-N-acetyl-alpha-D-glucosamine</name>
        <dbReference type="ChEBI" id="CHEBI:57705"/>
    </ligand>
</feature>
<feature type="binding site" evidence="1">
    <location>
        <position position="324"/>
    </location>
    <ligand>
        <name>UDP-N-acetyl-alpha-D-glucosamine</name>
        <dbReference type="ChEBI" id="CHEBI:57705"/>
    </ligand>
</feature>
<feature type="binding site" evidence="1">
    <location>
        <position position="330"/>
    </location>
    <ligand>
        <name>Mg(2+)</name>
        <dbReference type="ChEBI" id="CHEBI:18420"/>
    </ligand>
</feature>
<organism>
    <name type="scientific">Arthrobacter sp. (strain FB24)</name>
    <dbReference type="NCBI Taxonomy" id="290399"/>
    <lineage>
        <taxon>Bacteria</taxon>
        <taxon>Bacillati</taxon>
        <taxon>Actinomycetota</taxon>
        <taxon>Actinomycetes</taxon>
        <taxon>Micrococcales</taxon>
        <taxon>Micrococcaceae</taxon>
        <taxon>Arthrobacter</taxon>
    </lineage>
</organism>
<sequence>MTLIRRVAFLSLHTSPMEQPGSGDAGGMNVYVRALASALAASGVEVEIFTRSTSSGQPAVEHPDPGVCVHNVISGPPRKLPKEELPELLHSMVAEIERIRQRQPHGRYDLIHSHYWVSGVAGLELSRLWGVPLVHTMHTMAKVKNLLLQSGEKPEPRRREDGELRIVDGATRLIANTPAEAAELVSHYNADFDHIDVAPPGVDLTVFTPAFRPRSRAQLGVPAGKFHLLFAGRIQRLKGPQVLVKAAALLRSRRPDIDLQVTILGALSGAKDFDLKSLISAAGMDDVVTHHPPVNAPELAGWFRSADVVVMPSYSESFGLVALEAQACGTPVVATRVGGLSRAIFDGRTGLLVDGHKAADWADVLEALYDDPATRGDMGRAAALHAQGFGWQRTAAITLESYHAAVDQYIDSHRIPVGHSP</sequence>
<protein>
    <recommendedName>
        <fullName>D-inositol 3-phosphate glycosyltransferase</fullName>
        <ecNumber evidence="1">2.4.1.250</ecNumber>
    </recommendedName>
    <alternativeName>
        <fullName evidence="1">N-acetylglucosamine-inositol-phosphate N-acetylglucosaminyltransferase</fullName>
        <shortName evidence="1">GlcNAc-Ins-P N-acetylglucosaminyltransferase</shortName>
    </alternativeName>
</protein>